<evidence type="ECO:0000255" key="1">
    <source>
        <dbReference type="HAMAP-Rule" id="MF_00011"/>
    </source>
</evidence>
<sequence length="428" mass="47073">MSAFIVLGAQWGDEGKGKMTDYLAENADVVVRFQGGNNAGHTVVVGEKEYKLHLIPSGILYNDKLNVIGNGVVLDPKALFEEINYLESLGVEITPDRLIISDRAHVIMPYHRVLDGIKERARGNKDIGTTGKGIGPSYTDKMERSGIRVCDLIHKEVFEENLKETLEVKNKIITEVFGGEALDYNEIYNEYLGYAEKLRPFVKDISVIVNKKIKDGKEVLFEGAQGTLLDIDYGTYPYVTSSSTIAGGVCIGAGVGPTAITNAVGIAKAYTTRVGKGPFPTELLDSTGDWVREKGHEFGVTTGRARRCGWLDLVILKTSARISGLTSFAVTKIDTLAGLDTLKVCTGYRLNGEIIDYVPASLEDLAKCEPIYEEFEGWDDSIANARCYEDLPENAIKYLKKIEDFTETKVSIVSVGPKRDQTMMISEI</sequence>
<organism>
    <name type="scientific">Clostridium botulinum (strain Langeland / NCTC 10281 / Type F)</name>
    <dbReference type="NCBI Taxonomy" id="441772"/>
    <lineage>
        <taxon>Bacteria</taxon>
        <taxon>Bacillati</taxon>
        <taxon>Bacillota</taxon>
        <taxon>Clostridia</taxon>
        <taxon>Eubacteriales</taxon>
        <taxon>Clostridiaceae</taxon>
        <taxon>Clostridium</taxon>
    </lineage>
</organism>
<keyword id="KW-0963">Cytoplasm</keyword>
<keyword id="KW-0342">GTP-binding</keyword>
<keyword id="KW-0436">Ligase</keyword>
<keyword id="KW-0460">Magnesium</keyword>
<keyword id="KW-0479">Metal-binding</keyword>
<keyword id="KW-0547">Nucleotide-binding</keyword>
<keyword id="KW-0658">Purine biosynthesis</keyword>
<name>PURA_CLOBL</name>
<dbReference type="EC" id="6.3.4.4" evidence="1"/>
<dbReference type="EMBL" id="CP000728">
    <property type="protein sequence ID" value="ABS39775.1"/>
    <property type="molecule type" value="Genomic_DNA"/>
</dbReference>
<dbReference type="RefSeq" id="WP_003398908.1">
    <property type="nucleotide sequence ID" value="NC_009699.1"/>
</dbReference>
<dbReference type="SMR" id="A7GJL2"/>
<dbReference type="KEGG" id="cbf:CLI_3861"/>
<dbReference type="HOGENOM" id="CLU_029848_0_0_9"/>
<dbReference type="UniPathway" id="UPA00075">
    <property type="reaction ID" value="UER00335"/>
</dbReference>
<dbReference type="Proteomes" id="UP000002410">
    <property type="component" value="Chromosome"/>
</dbReference>
<dbReference type="GO" id="GO:0005737">
    <property type="term" value="C:cytoplasm"/>
    <property type="evidence" value="ECO:0007669"/>
    <property type="project" value="UniProtKB-SubCell"/>
</dbReference>
<dbReference type="GO" id="GO:0004019">
    <property type="term" value="F:adenylosuccinate synthase activity"/>
    <property type="evidence" value="ECO:0007669"/>
    <property type="project" value="UniProtKB-UniRule"/>
</dbReference>
<dbReference type="GO" id="GO:0005525">
    <property type="term" value="F:GTP binding"/>
    <property type="evidence" value="ECO:0007669"/>
    <property type="project" value="UniProtKB-UniRule"/>
</dbReference>
<dbReference type="GO" id="GO:0000287">
    <property type="term" value="F:magnesium ion binding"/>
    <property type="evidence" value="ECO:0007669"/>
    <property type="project" value="UniProtKB-UniRule"/>
</dbReference>
<dbReference type="GO" id="GO:0044208">
    <property type="term" value="P:'de novo' AMP biosynthetic process"/>
    <property type="evidence" value="ECO:0007669"/>
    <property type="project" value="UniProtKB-UniRule"/>
</dbReference>
<dbReference type="GO" id="GO:0046040">
    <property type="term" value="P:IMP metabolic process"/>
    <property type="evidence" value="ECO:0007669"/>
    <property type="project" value="TreeGrafter"/>
</dbReference>
<dbReference type="CDD" id="cd03108">
    <property type="entry name" value="AdSS"/>
    <property type="match status" value="1"/>
</dbReference>
<dbReference type="FunFam" id="1.10.300.10:FF:000001">
    <property type="entry name" value="Adenylosuccinate synthetase"/>
    <property type="match status" value="1"/>
</dbReference>
<dbReference type="FunFam" id="3.90.170.10:FF:000001">
    <property type="entry name" value="Adenylosuccinate synthetase"/>
    <property type="match status" value="1"/>
</dbReference>
<dbReference type="Gene3D" id="3.40.440.10">
    <property type="entry name" value="Adenylosuccinate Synthetase, subunit A, domain 1"/>
    <property type="match status" value="1"/>
</dbReference>
<dbReference type="Gene3D" id="1.10.300.10">
    <property type="entry name" value="Adenylosuccinate Synthetase, subunit A, domain 2"/>
    <property type="match status" value="1"/>
</dbReference>
<dbReference type="Gene3D" id="3.90.170.10">
    <property type="entry name" value="Adenylosuccinate Synthetase, subunit A, domain 3"/>
    <property type="match status" value="1"/>
</dbReference>
<dbReference type="HAMAP" id="MF_00011">
    <property type="entry name" value="Adenylosucc_synth"/>
    <property type="match status" value="1"/>
</dbReference>
<dbReference type="InterPro" id="IPR018220">
    <property type="entry name" value="Adenylosuccin_syn_GTP-bd"/>
</dbReference>
<dbReference type="InterPro" id="IPR033128">
    <property type="entry name" value="Adenylosuccin_syn_Lys_AS"/>
</dbReference>
<dbReference type="InterPro" id="IPR042109">
    <property type="entry name" value="Adenylosuccinate_synth_dom1"/>
</dbReference>
<dbReference type="InterPro" id="IPR042110">
    <property type="entry name" value="Adenylosuccinate_synth_dom2"/>
</dbReference>
<dbReference type="InterPro" id="IPR042111">
    <property type="entry name" value="Adenylosuccinate_synth_dom3"/>
</dbReference>
<dbReference type="InterPro" id="IPR001114">
    <property type="entry name" value="Adenylosuccinate_synthetase"/>
</dbReference>
<dbReference type="InterPro" id="IPR027417">
    <property type="entry name" value="P-loop_NTPase"/>
</dbReference>
<dbReference type="NCBIfam" id="NF002223">
    <property type="entry name" value="PRK01117.1"/>
    <property type="match status" value="1"/>
</dbReference>
<dbReference type="NCBIfam" id="TIGR00184">
    <property type="entry name" value="purA"/>
    <property type="match status" value="1"/>
</dbReference>
<dbReference type="PANTHER" id="PTHR11846">
    <property type="entry name" value="ADENYLOSUCCINATE SYNTHETASE"/>
    <property type="match status" value="1"/>
</dbReference>
<dbReference type="PANTHER" id="PTHR11846:SF0">
    <property type="entry name" value="ADENYLOSUCCINATE SYNTHETASE"/>
    <property type="match status" value="1"/>
</dbReference>
<dbReference type="Pfam" id="PF00709">
    <property type="entry name" value="Adenylsucc_synt"/>
    <property type="match status" value="1"/>
</dbReference>
<dbReference type="SMART" id="SM00788">
    <property type="entry name" value="Adenylsucc_synt"/>
    <property type="match status" value="1"/>
</dbReference>
<dbReference type="SUPFAM" id="SSF52540">
    <property type="entry name" value="P-loop containing nucleoside triphosphate hydrolases"/>
    <property type="match status" value="1"/>
</dbReference>
<dbReference type="PROSITE" id="PS01266">
    <property type="entry name" value="ADENYLOSUCCIN_SYN_1"/>
    <property type="match status" value="1"/>
</dbReference>
<dbReference type="PROSITE" id="PS00513">
    <property type="entry name" value="ADENYLOSUCCIN_SYN_2"/>
    <property type="match status" value="1"/>
</dbReference>
<gene>
    <name evidence="1" type="primary">purA</name>
    <name type="ordered locus">CLI_3861</name>
</gene>
<reference key="1">
    <citation type="submission" date="2007-06" db="EMBL/GenBank/DDBJ databases">
        <authorList>
            <person name="Brinkac L.M."/>
            <person name="Daugherty S."/>
            <person name="Dodson R.J."/>
            <person name="Madupu R."/>
            <person name="Brown J.L."/>
            <person name="Bruce D."/>
            <person name="Detter C."/>
            <person name="Munk C."/>
            <person name="Smith L.A."/>
            <person name="Smith T.J."/>
            <person name="White O."/>
            <person name="Brettin T.S."/>
        </authorList>
    </citation>
    <scope>NUCLEOTIDE SEQUENCE [LARGE SCALE GENOMIC DNA]</scope>
    <source>
        <strain>Langeland / NCTC 10281 / Type F</strain>
    </source>
</reference>
<feature type="chain" id="PRO_1000000804" description="Adenylosuccinate synthetase">
    <location>
        <begin position="1"/>
        <end position="428"/>
    </location>
</feature>
<feature type="active site" description="Proton acceptor" evidence="1">
    <location>
        <position position="13"/>
    </location>
</feature>
<feature type="active site" description="Proton donor" evidence="1">
    <location>
        <position position="41"/>
    </location>
</feature>
<feature type="binding site" evidence="1">
    <location>
        <begin position="12"/>
        <end position="18"/>
    </location>
    <ligand>
        <name>GTP</name>
        <dbReference type="ChEBI" id="CHEBI:37565"/>
    </ligand>
</feature>
<feature type="binding site" description="in other chain" evidence="1">
    <location>
        <begin position="13"/>
        <end position="16"/>
    </location>
    <ligand>
        <name>IMP</name>
        <dbReference type="ChEBI" id="CHEBI:58053"/>
        <note>ligand shared between dimeric partners</note>
    </ligand>
</feature>
<feature type="binding site" evidence="1">
    <location>
        <position position="13"/>
    </location>
    <ligand>
        <name>Mg(2+)</name>
        <dbReference type="ChEBI" id="CHEBI:18420"/>
    </ligand>
</feature>
<feature type="binding site" description="in other chain" evidence="1">
    <location>
        <begin position="38"/>
        <end position="41"/>
    </location>
    <ligand>
        <name>IMP</name>
        <dbReference type="ChEBI" id="CHEBI:58053"/>
        <note>ligand shared between dimeric partners</note>
    </ligand>
</feature>
<feature type="binding site" evidence="1">
    <location>
        <begin position="40"/>
        <end position="42"/>
    </location>
    <ligand>
        <name>GTP</name>
        <dbReference type="ChEBI" id="CHEBI:37565"/>
    </ligand>
</feature>
<feature type="binding site" evidence="1">
    <location>
        <position position="40"/>
    </location>
    <ligand>
        <name>Mg(2+)</name>
        <dbReference type="ChEBI" id="CHEBI:18420"/>
    </ligand>
</feature>
<feature type="binding site" description="in other chain" evidence="1">
    <location>
        <position position="130"/>
    </location>
    <ligand>
        <name>IMP</name>
        <dbReference type="ChEBI" id="CHEBI:58053"/>
        <note>ligand shared between dimeric partners</note>
    </ligand>
</feature>
<feature type="binding site" evidence="1">
    <location>
        <position position="144"/>
    </location>
    <ligand>
        <name>IMP</name>
        <dbReference type="ChEBI" id="CHEBI:58053"/>
        <note>ligand shared between dimeric partners</note>
    </ligand>
</feature>
<feature type="binding site" description="in other chain" evidence="1">
    <location>
        <position position="225"/>
    </location>
    <ligand>
        <name>IMP</name>
        <dbReference type="ChEBI" id="CHEBI:58053"/>
        <note>ligand shared between dimeric partners</note>
    </ligand>
</feature>
<feature type="binding site" description="in other chain" evidence="1">
    <location>
        <position position="240"/>
    </location>
    <ligand>
        <name>IMP</name>
        <dbReference type="ChEBI" id="CHEBI:58053"/>
        <note>ligand shared between dimeric partners</note>
    </ligand>
</feature>
<feature type="binding site" evidence="1">
    <location>
        <begin position="300"/>
        <end position="306"/>
    </location>
    <ligand>
        <name>substrate</name>
    </ligand>
</feature>
<feature type="binding site" description="in other chain" evidence="1">
    <location>
        <position position="304"/>
    </location>
    <ligand>
        <name>IMP</name>
        <dbReference type="ChEBI" id="CHEBI:58053"/>
        <note>ligand shared between dimeric partners</note>
    </ligand>
</feature>
<feature type="binding site" evidence="1">
    <location>
        <position position="306"/>
    </location>
    <ligand>
        <name>GTP</name>
        <dbReference type="ChEBI" id="CHEBI:37565"/>
    </ligand>
</feature>
<feature type="binding site" evidence="1">
    <location>
        <begin position="332"/>
        <end position="334"/>
    </location>
    <ligand>
        <name>GTP</name>
        <dbReference type="ChEBI" id="CHEBI:37565"/>
    </ligand>
</feature>
<feature type="binding site" evidence="1">
    <location>
        <begin position="414"/>
        <end position="416"/>
    </location>
    <ligand>
        <name>GTP</name>
        <dbReference type="ChEBI" id="CHEBI:37565"/>
    </ligand>
</feature>
<proteinExistence type="inferred from homology"/>
<comment type="function">
    <text evidence="1">Plays an important role in the de novo pathway of purine nucleotide biosynthesis. Catalyzes the first committed step in the biosynthesis of AMP from IMP.</text>
</comment>
<comment type="catalytic activity">
    <reaction evidence="1">
        <text>IMP + L-aspartate + GTP = N(6)-(1,2-dicarboxyethyl)-AMP + GDP + phosphate + 2 H(+)</text>
        <dbReference type="Rhea" id="RHEA:15753"/>
        <dbReference type="ChEBI" id="CHEBI:15378"/>
        <dbReference type="ChEBI" id="CHEBI:29991"/>
        <dbReference type="ChEBI" id="CHEBI:37565"/>
        <dbReference type="ChEBI" id="CHEBI:43474"/>
        <dbReference type="ChEBI" id="CHEBI:57567"/>
        <dbReference type="ChEBI" id="CHEBI:58053"/>
        <dbReference type="ChEBI" id="CHEBI:58189"/>
        <dbReference type="EC" id="6.3.4.4"/>
    </reaction>
</comment>
<comment type="cofactor">
    <cofactor evidence="1">
        <name>Mg(2+)</name>
        <dbReference type="ChEBI" id="CHEBI:18420"/>
    </cofactor>
    <text evidence="1">Binds 1 Mg(2+) ion per subunit.</text>
</comment>
<comment type="pathway">
    <text evidence="1">Purine metabolism; AMP biosynthesis via de novo pathway; AMP from IMP: step 1/2.</text>
</comment>
<comment type="subunit">
    <text evidence="1">Homodimer.</text>
</comment>
<comment type="subcellular location">
    <subcellularLocation>
        <location evidence="1">Cytoplasm</location>
    </subcellularLocation>
</comment>
<comment type="similarity">
    <text evidence="1">Belongs to the adenylosuccinate synthetase family.</text>
</comment>
<accession>A7GJL2</accession>
<protein>
    <recommendedName>
        <fullName evidence="1">Adenylosuccinate synthetase</fullName>
        <shortName evidence="1">AMPSase</shortName>
        <shortName evidence="1">AdSS</shortName>
        <ecNumber evidence="1">6.3.4.4</ecNumber>
    </recommendedName>
    <alternativeName>
        <fullName evidence="1">IMP--aspartate ligase</fullName>
    </alternativeName>
</protein>